<name>LP9H_MALCI</name>
<keyword id="KW-0119">Carbohydrate metabolism</keyword>
<keyword id="KW-0136">Cellulose degradation</keyword>
<keyword id="KW-0186">Copper</keyword>
<keyword id="KW-1015">Disulfide bond</keyword>
<keyword id="KW-0479">Metal-binding</keyword>
<keyword id="KW-0503">Monooxygenase</keyword>
<keyword id="KW-0560">Oxidoreductase</keyword>
<keyword id="KW-0624">Polysaccharide degradation</keyword>
<keyword id="KW-0964">Secreted</keyword>
<keyword id="KW-0732">Signal</keyword>
<organism>
    <name type="scientific">Malbranchea cinnamomea</name>
    <name type="common">Thermophilic fungus</name>
    <name type="synonym">Malbranchea sulfurea</name>
    <dbReference type="NCBI Taxonomy" id="5041"/>
    <lineage>
        <taxon>Eukaryota</taxon>
        <taxon>Fungi</taxon>
        <taxon>Dikarya</taxon>
        <taxon>Ascomycota</taxon>
        <taxon>Pezizomycotina</taxon>
        <taxon>Eurotiomycetes</taxon>
        <taxon>Eurotiomycetidae</taxon>
        <taxon>Onygenales</taxon>
        <taxon>Malbrancheaceae</taxon>
        <taxon>Malbranchea</taxon>
    </lineage>
</organism>
<accession>A0A5J6BJQ5</accession>
<reference key="1">
    <citation type="journal article" date="2019" name="Appl. Environ. Microbiol.">
        <title>Specific xylan activity revealed for AA9 lytic polysaccharide monooxygenases of the thermophilic fungus Malbranchea cinnamomea by functional characterization.</title>
        <authorList>
            <person name="Huettner S."/>
            <person name="Varnai A."/>
            <person name="Petrovic D.M."/>
            <person name="Bach C.X."/>
            <person name="Kim Anh D.T."/>
            <person name="Thanh V.N."/>
            <person name="Eijsink V.G.H."/>
            <person name="Larsbrink J."/>
            <person name="Olsson L."/>
        </authorList>
    </citation>
    <scope>NUCLEOTIDE SEQUENCE [GENOMIC DNA]</scope>
    <scope>FUNCTION</scope>
    <scope>CATALYTIC ACTIVITY</scope>
    <source>
        <strain>FCH 10.5</strain>
    </source>
</reference>
<reference key="2">
    <citation type="journal article" date="2017" name="Biotechnol. Biofuels">
        <title>Combined genome and transcriptome sequencing to investigate the plant cell wall degrading enzyme system in the thermophilic fungus Malbranchea cinnamomea.</title>
        <authorList>
            <person name="Huettner S."/>
            <person name="Nguyen T.T."/>
            <person name="Granchi Z."/>
            <person name="Chin-A-Woeng T."/>
            <person name="Ahren D."/>
            <person name="Larsbrink J."/>
            <person name="Thanh V.N."/>
            <person name="Olsson L."/>
        </authorList>
    </citation>
    <scope>INDUCTION</scope>
</reference>
<protein>
    <recommendedName>
        <fullName evidence="7">AA9 family lytic polysaccharide monooxygenase H</fullName>
        <shortName evidence="7">AA9H</shortName>
        <shortName evidence="7">LPMO9H</shortName>
        <ecNumber evidence="6">1.14.99.56</ecNumber>
    </recommendedName>
    <alternativeName>
        <fullName evidence="8">Cellulase LPMO9H</fullName>
    </alternativeName>
    <alternativeName>
        <fullName evidence="8">Endo-beta-1,4-glucanase LPMO9H</fullName>
        <shortName evidence="8">Endoglucanase LPMO9H</shortName>
    </alternativeName>
    <alternativeName>
        <fullName evidence="8">Glycosyl hydrolase 61 family protein LPMO9H</fullName>
    </alternativeName>
</protein>
<comment type="function">
    <text evidence="6">Lytic polysaccharide monooxygenase (LPMO) that depolymerizes crystalline and amorphous polysaccharides via the oxidation of scissile alpha- or beta-(1-4)-glycosidic bonds, yielding primarly C1 oxidation products (PubMed:31540984). Catalysis by LPMOs requires the reduction of the active-site copper from Cu(II) to Cu(I) by a reducing agent and H(2)O(2) or O(2) as a cosubstrate (PubMed:31540984). Active on hemicelluloses, including xylan, glucomannan, and xyloglucan (PubMed:31540984). Preferentially cleaves residual xylan in phosphoric acid-swollen cellulose (PASC). Moreover, when exposed to cellulose-xylan blends, shows a preference for xylan and for releasing oxidized xylooligosaccharides (PubMed:31540984). Has no activity on ivory nut mannan (INM), a linear beta-1,4-linked mannan without substitutions (PubMed:31540984).</text>
</comment>
<comment type="catalytic activity">
    <reaction evidence="6">
        <text>[(1-&gt;4)-beta-D-glucosyl]n+m + reduced acceptor + O2 = 4-dehydro-beta-D-glucosyl-[(1-&gt;4)-beta-D-glucosyl]n-1 + [(1-&gt;4)-beta-D-glucosyl]m + acceptor + H2O.</text>
        <dbReference type="EC" id="1.14.99.56"/>
    </reaction>
</comment>
<comment type="cofactor">
    <cofactor evidence="2">
        <name>Cu(2+)</name>
        <dbReference type="ChEBI" id="CHEBI:29036"/>
    </cofactor>
    <text evidence="2">Binds 1 copper ion per subunit.</text>
</comment>
<comment type="subcellular location">
    <subcellularLocation>
        <location evidence="9">Secreted</location>
    </subcellularLocation>
</comment>
<comment type="induction">
    <text evidence="5">Expression is up-regulated during growth on wheat bran compared to that on glucose (PubMed:29158777). Expression is also highly up-regulated on beechwood xylan as the sole carbon source (PubMed:29158777).</text>
</comment>
<comment type="biotechnology">
    <text evidence="2">Lignocellulose is the most abundant polymeric composite on Earth and is a recalcitrant but promising renewable substrate for industrial biotechnology applications. Together with cellobiose dehydrogenases (CDHs) an enzymatic system capable of oxidative cellulose cleavage is formed, which increases the efficiency of cellulases and put LPMOs at focus of biofuel research.</text>
</comment>
<comment type="similarity">
    <text evidence="8">Belongs to the polysaccharide monooxygenase AA9 family.</text>
</comment>
<feature type="signal peptide" evidence="4">
    <location>
        <begin position="1"/>
        <end position="17"/>
    </location>
</feature>
<feature type="chain" id="PRO_5023812234" description="AA9 family lytic polysaccharide monooxygenase H">
    <location>
        <begin position="18"/>
        <end position="230"/>
    </location>
</feature>
<feature type="binding site" evidence="3">
    <location>
        <position position="18"/>
    </location>
    <ligand>
        <name>Cu(2+)</name>
        <dbReference type="ChEBI" id="CHEBI:29036"/>
        <note>catalytic</note>
    </ligand>
</feature>
<feature type="binding site" evidence="3">
    <location>
        <position position="89"/>
    </location>
    <ligand>
        <name>Cu(2+)</name>
        <dbReference type="ChEBI" id="CHEBI:29036"/>
        <note>catalytic</note>
    </ligand>
</feature>
<feature type="binding site" evidence="2">
    <location>
        <position position="164"/>
    </location>
    <ligand>
        <name>O2</name>
        <dbReference type="ChEBI" id="CHEBI:15379"/>
    </ligand>
</feature>
<feature type="binding site" evidence="2">
    <location>
        <position position="173"/>
    </location>
    <ligand>
        <name>O2</name>
        <dbReference type="ChEBI" id="CHEBI:15379"/>
    </ligand>
</feature>
<feature type="binding site" evidence="3">
    <location>
        <position position="175"/>
    </location>
    <ligand>
        <name>Cu(2+)</name>
        <dbReference type="ChEBI" id="CHEBI:29036"/>
        <note>catalytic</note>
    </ligand>
</feature>
<feature type="disulfide bond" evidence="1">
    <location>
        <begin position="59"/>
        <end position="178"/>
    </location>
</feature>
<gene>
    <name evidence="7" type="primary">LPMO9H</name>
    <name evidence="7" type="synonym">AA9H</name>
</gene>
<sequence>MKTLSAGLLALASAASAHYTFPSLIANGVVTGEWEYVRQTENHYSNAPVTDVSSEAIRCYENPGRPAAKTLSVAAGSTVGFTVSPSIYHPGPLQFYMARVPDGQTADSWDGSGQVWFKIFEQGPQIDPSGLTWPSDGLSQVQVTIPSSLPSGDYLLRVEQIGLHSASSVNGAQFYLSCAQLTVTGGGNGNPGPLVSFPGAYSPTDPGLLINIYWPIPTSYELPGPPVWRG</sequence>
<dbReference type="EC" id="1.14.99.56" evidence="6"/>
<dbReference type="EMBL" id="MK135889">
    <property type="protein sequence ID" value="QDV60872.1"/>
    <property type="molecule type" value="Genomic_DNA"/>
</dbReference>
<dbReference type="SMR" id="A0A5J6BJQ5"/>
<dbReference type="GO" id="GO:0005576">
    <property type="term" value="C:extracellular region"/>
    <property type="evidence" value="ECO:0007669"/>
    <property type="project" value="UniProtKB-SubCell"/>
</dbReference>
<dbReference type="GO" id="GO:0046872">
    <property type="term" value="F:metal ion binding"/>
    <property type="evidence" value="ECO:0007669"/>
    <property type="project" value="UniProtKB-KW"/>
</dbReference>
<dbReference type="GO" id="GO:0004497">
    <property type="term" value="F:monooxygenase activity"/>
    <property type="evidence" value="ECO:0007669"/>
    <property type="project" value="UniProtKB-KW"/>
</dbReference>
<dbReference type="GO" id="GO:0030245">
    <property type="term" value="P:cellulose catabolic process"/>
    <property type="evidence" value="ECO:0007669"/>
    <property type="project" value="UniProtKB-KW"/>
</dbReference>
<dbReference type="CDD" id="cd21175">
    <property type="entry name" value="LPMO_AA9"/>
    <property type="match status" value="1"/>
</dbReference>
<dbReference type="Gene3D" id="2.70.50.70">
    <property type="match status" value="1"/>
</dbReference>
<dbReference type="InterPro" id="IPR049892">
    <property type="entry name" value="AA9"/>
</dbReference>
<dbReference type="InterPro" id="IPR005103">
    <property type="entry name" value="AA9_LPMO"/>
</dbReference>
<dbReference type="PANTHER" id="PTHR33353:SF10">
    <property type="entry name" value="ENDO-BETA-1,4-GLUCANASE D"/>
    <property type="match status" value="1"/>
</dbReference>
<dbReference type="PANTHER" id="PTHR33353">
    <property type="entry name" value="PUTATIVE (AFU_ORTHOLOGUE AFUA_1G12560)-RELATED"/>
    <property type="match status" value="1"/>
</dbReference>
<dbReference type="Pfam" id="PF03443">
    <property type="entry name" value="AA9"/>
    <property type="match status" value="1"/>
</dbReference>
<evidence type="ECO:0000250" key="1">
    <source>
        <dbReference type="UniProtKB" id="A0A4P8PKE4"/>
    </source>
</evidence>
<evidence type="ECO:0000250" key="2">
    <source>
        <dbReference type="UniProtKB" id="Q1K8B6"/>
    </source>
</evidence>
<evidence type="ECO:0000250" key="3">
    <source>
        <dbReference type="UniProtKB" id="Q7Z9M7"/>
    </source>
</evidence>
<evidence type="ECO:0000255" key="4"/>
<evidence type="ECO:0000269" key="5">
    <source>
    </source>
</evidence>
<evidence type="ECO:0000269" key="6">
    <source>
    </source>
</evidence>
<evidence type="ECO:0000303" key="7">
    <source>
    </source>
</evidence>
<evidence type="ECO:0000305" key="8"/>
<evidence type="ECO:0000305" key="9">
    <source>
    </source>
</evidence>
<proteinExistence type="evidence at protein level"/>